<proteinExistence type="inferred from homology"/>
<feature type="chain" id="PRO_0000099076" description="Early transcription factor 70 kDa subunit">
    <location>
        <begin position="1"/>
        <end position="635"/>
    </location>
</feature>
<feature type="domain" description="Helicase ATP-binding" evidence="2">
    <location>
        <begin position="32"/>
        <end position="185"/>
    </location>
</feature>
<feature type="domain" description="Helicase C-terminal" evidence="3">
    <location>
        <begin position="326"/>
        <end position="505"/>
    </location>
</feature>
<feature type="short sequence motif" description="DEXH box">
    <location>
        <begin position="135"/>
        <end position="138"/>
    </location>
</feature>
<feature type="binding site" evidence="2">
    <location>
        <begin position="45"/>
        <end position="52"/>
    </location>
    <ligand>
        <name>ATP</name>
        <dbReference type="ChEBI" id="CHEBI:30616"/>
    </ligand>
</feature>
<keyword id="KW-0010">Activator</keyword>
<keyword id="KW-0067">ATP-binding</keyword>
<keyword id="KW-0238">DNA-binding</keyword>
<keyword id="KW-0347">Helicase</keyword>
<keyword id="KW-0378">Hydrolase</keyword>
<keyword id="KW-0547">Nucleotide-binding</keyword>
<keyword id="KW-1185">Reference proteome</keyword>
<keyword id="KW-0804">Transcription</keyword>
<keyword id="KW-0805">Transcription regulation</keyword>
<keyword id="KW-0946">Virion</keyword>
<accession>Q9Q8L9</accession>
<reference key="1">
    <citation type="journal article" date="1999" name="Virology">
        <title>The complete DNA sequence of myxoma virus.</title>
        <authorList>
            <person name="Cameron C."/>
            <person name="Hota-Mitchell S."/>
            <person name="Chen L."/>
            <person name="Barrett J.W."/>
            <person name="Cao J.-X."/>
            <person name="Macaulay C."/>
            <person name="Willer D.O."/>
            <person name="Evans D.H."/>
            <person name="McFadden G."/>
        </authorList>
    </citation>
    <scope>NUCLEOTIDE SEQUENCE [LARGE SCALE GENOMIC DNA]</scope>
</reference>
<evidence type="ECO:0000250" key="1"/>
<evidence type="ECO:0000255" key="2">
    <source>
        <dbReference type="PROSITE-ProRule" id="PRU00541"/>
    </source>
</evidence>
<evidence type="ECO:0000255" key="3">
    <source>
        <dbReference type="PROSITE-ProRule" id="PRU00542"/>
    </source>
</evidence>
<evidence type="ECO:0000305" key="4"/>
<dbReference type="EC" id="3.6.4.-"/>
<dbReference type="EMBL" id="AF170726">
    <property type="protein sequence ID" value="AAF14969.1"/>
    <property type="molecule type" value="Genomic_DNA"/>
</dbReference>
<dbReference type="RefSeq" id="NP_051795.1">
    <property type="nucleotide sequence ID" value="NC_001132.2"/>
</dbReference>
<dbReference type="SMR" id="Q9Q8L9"/>
<dbReference type="GeneID" id="932122"/>
<dbReference type="KEGG" id="vg:932122"/>
<dbReference type="Proteomes" id="UP000000867">
    <property type="component" value="Segment"/>
</dbReference>
<dbReference type="GO" id="GO:0044423">
    <property type="term" value="C:virion component"/>
    <property type="evidence" value="ECO:0007669"/>
    <property type="project" value="UniProtKB-KW"/>
</dbReference>
<dbReference type="GO" id="GO:0005524">
    <property type="term" value="F:ATP binding"/>
    <property type="evidence" value="ECO:0007669"/>
    <property type="project" value="UniProtKB-KW"/>
</dbReference>
<dbReference type="GO" id="GO:0003677">
    <property type="term" value="F:DNA binding"/>
    <property type="evidence" value="ECO:0007669"/>
    <property type="project" value="UniProtKB-KW"/>
</dbReference>
<dbReference type="GO" id="GO:0004386">
    <property type="term" value="F:helicase activity"/>
    <property type="evidence" value="ECO:0007669"/>
    <property type="project" value="UniProtKB-KW"/>
</dbReference>
<dbReference type="GO" id="GO:0016787">
    <property type="term" value="F:hydrolase activity"/>
    <property type="evidence" value="ECO:0007669"/>
    <property type="project" value="UniProtKB-KW"/>
</dbReference>
<dbReference type="Gene3D" id="3.40.50.300">
    <property type="entry name" value="P-loop containing nucleotide triphosphate hydrolases"/>
    <property type="match status" value="2"/>
</dbReference>
<dbReference type="InterPro" id="IPR002464">
    <property type="entry name" value="DNA/RNA_helicase_DEAH_CS"/>
</dbReference>
<dbReference type="InterPro" id="IPR006935">
    <property type="entry name" value="Helicase/UvrB_N"/>
</dbReference>
<dbReference type="InterPro" id="IPR014001">
    <property type="entry name" value="Helicase_ATP-bd"/>
</dbReference>
<dbReference type="InterPro" id="IPR001650">
    <property type="entry name" value="Helicase_C-like"/>
</dbReference>
<dbReference type="InterPro" id="IPR027417">
    <property type="entry name" value="P-loop_NTPase"/>
</dbReference>
<dbReference type="Pfam" id="PF00271">
    <property type="entry name" value="Helicase_C"/>
    <property type="match status" value="1"/>
</dbReference>
<dbReference type="Pfam" id="PF04851">
    <property type="entry name" value="ResIII"/>
    <property type="match status" value="1"/>
</dbReference>
<dbReference type="SMART" id="SM00487">
    <property type="entry name" value="DEXDc"/>
    <property type="match status" value="1"/>
</dbReference>
<dbReference type="SUPFAM" id="SSF52540">
    <property type="entry name" value="P-loop containing nucleoside triphosphate hydrolases"/>
    <property type="match status" value="2"/>
</dbReference>
<dbReference type="PROSITE" id="PS00690">
    <property type="entry name" value="DEAH_ATP_HELICASE"/>
    <property type="match status" value="1"/>
</dbReference>
<dbReference type="PROSITE" id="PS51192">
    <property type="entry name" value="HELICASE_ATP_BIND_1"/>
    <property type="match status" value="1"/>
</dbReference>
<dbReference type="PROSITE" id="PS51194">
    <property type="entry name" value="HELICASE_CTER"/>
    <property type="match status" value="1"/>
</dbReference>
<sequence length="635" mass="73219">MNSAVIELFRHHVNNIPNILPHQLATLDYLVRSIIDENKSVLLFHIMGSGKTIIALLFALVASRFKKVYILVPNINILKIFNYSMDVVINLFNADYILENIFIYSTTSFYSINYNDNVINYNGLSRYNNAIFIIDEAHNIFGNNTGELMTVIKNKNKIPFLLLSGSPITNTPITLSNIISLMSDEEINFGDIIIQGKKVFQILLNEHGVNVLKNILKGRISYYKMPDTDLPGIQYHGKSFLDTRVVYCNMSKLQEKDYINVRKMCNNEMFEKNMNNVSLAVLGQLNLINNLDILFQEQDKELYPNLKINNGVLYGEELVTLNISSKFKYFITKIESLKGKHFIYFSNSTYGGLIIKYIMLSNGYSEYNGSQGTHPKLIHGRPKTFAIVTSKMKASLEDLLVTYNSLANDDGSQIMFLFSSNIMSESYTLKEVRNIWFMTIPDTFSQYNQILGRSIRKFSYKDITQPVNVYLLAAVYSDFNDTIESLDDYSLEEINTLPFDIKKLLYLKFKTKETNRIYSILENISDSYTQPPHPHIVEIVLGEIVRQFFYHHSRIKHNDERLLAAVKSVLTNTEAAKKYIKEIVDGHFFVSNKVFDKSLLYMYNDEIITVPFKLSHEPFVWGVNFRKEYNVVSSP</sequence>
<organismHost>
    <name type="scientific">Oryctolagus cuniculus</name>
    <name type="common">Rabbit</name>
    <dbReference type="NCBI Taxonomy" id="9986"/>
</organismHost>
<organism>
    <name type="scientific">Myxoma virus (strain Lausanne)</name>
    <name type="common">MYXV</name>
    <dbReference type="NCBI Taxonomy" id="31530"/>
    <lineage>
        <taxon>Viruses</taxon>
        <taxon>Varidnaviria</taxon>
        <taxon>Bamfordvirae</taxon>
        <taxon>Nucleocytoviricota</taxon>
        <taxon>Pokkesviricetes</taxon>
        <taxon>Chitovirales</taxon>
        <taxon>Poxviridae</taxon>
        <taxon>Chordopoxvirinae</taxon>
        <taxon>Leporipoxvirus</taxon>
        <taxon>Myxoma virus</taxon>
    </lineage>
</organism>
<name>ETF1_MYXVL</name>
<gene>
    <name type="primary">VETFS</name>
    <name type="ordered locus">m081R</name>
</gene>
<protein>
    <recommendedName>
        <fullName>Early transcription factor 70 kDa subunit</fullName>
        <ecNumber>3.6.4.-</ecNumber>
    </recommendedName>
    <alternativeName>
        <fullName>ATP-dependent helicase VETFS</fullName>
    </alternativeName>
    <alternativeName>
        <fullName>ETF small subunit</fullName>
    </alternativeName>
</protein>
<comment type="function">
    <text evidence="1">Acts with RNA polymerase to initiate transcription from early gene promoters. Is recruited by the RPO-associated protein of 94 kDa (RAP94) to form the early transcription complex, which also contains the core RNA polymerase. ETF heterodimer binds to early gene promoters (By similarity).</text>
</comment>
<comment type="subunit">
    <text evidence="1">Heterodimer of a 70 kDa and a 82 kDa subunit. Part of the early transcription complex composed of ETF, RAP94, and the DNA-directed RNA polymerase (By similarity).</text>
</comment>
<comment type="subcellular location">
    <subcellularLocation>
        <location evidence="4">Virion</location>
    </subcellularLocation>
    <text>All the enzymes and other proteins required to synthesize early mRNAs are packaged within the virion core along with the DNA genome. This is necessary because viral early mRNAs are synthesized within minutes after virus entry into the cell and are extruded through pores in the core particle.</text>
</comment>
<comment type="similarity">
    <text evidence="4">Belongs to the helicase family. VETF subfamily.</text>
</comment>